<sequence>MDLPGNDFDSNDFDAVDLWGADGAEGWTADPIIGVGSAATPDTGPDLDNAHGQAETDTEQEIALFTVTNPPRTVSVSTLMDGRIDHVELSARVAWMSESQLASEILVIADLARQKAQSAQYAFILDRMSQQVDADEHRVALLRKTVGETWGLPSPEEAAAAEAEVFATRYSDDCPAPDDESDPW</sequence>
<name>ESPD_MYCTU</name>
<organism>
    <name type="scientific">Mycobacterium tuberculosis (strain ATCC 25618 / H37Rv)</name>
    <dbReference type="NCBI Taxonomy" id="83332"/>
    <lineage>
        <taxon>Bacteria</taxon>
        <taxon>Bacillati</taxon>
        <taxon>Actinomycetota</taxon>
        <taxon>Actinomycetes</taxon>
        <taxon>Mycobacteriales</taxon>
        <taxon>Mycobacteriaceae</taxon>
        <taxon>Mycobacterium</taxon>
        <taxon>Mycobacterium tuberculosis complex</taxon>
    </lineage>
</organism>
<comment type="function">
    <text evidence="2 5">Required for ESX-1 function (PubMed:16135231, PubMed:22155774). Required for the maintenance of adequate cellular levels of both EspA and EspC (PubMed:22155774). Facilitates EsxA secretion (PubMed:22155774).</text>
</comment>
<comment type="subunit">
    <text evidence="2">Interacts with EccE1.</text>
</comment>
<comment type="interaction">
    <interactant intactId="EBI-26358082">
        <id>P9WJD5</id>
    </interactant>
    <interactant intactId="EBI-25767670">
        <id>P9WJB9</id>
        <label>espL</label>
    </interactant>
    <organismsDiffer>false</organismsDiffer>
    <experiments>2</experiments>
</comment>
<comment type="subcellular location">
    <subcellularLocation>
        <location evidence="5">Secreted</location>
    </subcellularLocation>
    <text evidence="5">Export does not exclusively require ESX-1. May require one (or more) of the other ESX / type VII secretion systems (T7SS).</text>
</comment>
<comment type="induction">
    <text evidence="3 4 6 7 8">Transcriptionally activated by EspR (PubMed:18685700, PubMed:22389481, PubMed:25536998). Repressed by the MprB/MprA two-component system, by direct regulation and via EspR (PubMed:23104803, PubMed:25536998). Up-regulated by the PhoP/PhoR two-component system, via EspR (PubMed:16573683, PubMed:25536998).</text>
</comment>
<comment type="disruption phenotype">
    <text evidence="5">EspD deficiency results in decreased cellular levels of EspA and EspC, but does not affect their transcription.</text>
</comment>
<dbReference type="EMBL" id="AL123456">
    <property type="protein sequence ID" value="CCP46437.1"/>
    <property type="molecule type" value="Genomic_DNA"/>
</dbReference>
<dbReference type="PIR" id="G70956">
    <property type="entry name" value="G70956"/>
</dbReference>
<dbReference type="RefSeq" id="NP_218131.1">
    <property type="nucleotide sequence ID" value="NC_000962.3"/>
</dbReference>
<dbReference type="RefSeq" id="WP_003419545.1">
    <property type="nucleotide sequence ID" value="NZ_NVQJ01000056.1"/>
</dbReference>
<dbReference type="SMR" id="P9WJD5"/>
<dbReference type="BioGRID" id="4355263">
    <property type="interactions" value="1"/>
</dbReference>
<dbReference type="IntAct" id="P9WJD5">
    <property type="interactions" value="1"/>
</dbReference>
<dbReference type="MINT" id="P9WJD5"/>
<dbReference type="STRING" id="83332.Rv3614c"/>
<dbReference type="PaxDb" id="83332-Rv3614c"/>
<dbReference type="DNASU" id="885777"/>
<dbReference type="GeneID" id="45427600"/>
<dbReference type="GeneID" id="885777"/>
<dbReference type="KEGG" id="mtu:Rv3614c"/>
<dbReference type="KEGG" id="mtv:RVBD_3614c"/>
<dbReference type="PATRIC" id="fig|83332.111.peg.4020"/>
<dbReference type="TubercuList" id="Rv3614c"/>
<dbReference type="eggNOG" id="ENOG5031JYJ">
    <property type="taxonomic scope" value="Bacteria"/>
</dbReference>
<dbReference type="InParanoid" id="P9WJD5"/>
<dbReference type="OrthoDB" id="4641051at2"/>
<dbReference type="Proteomes" id="UP000001584">
    <property type="component" value="Chromosome"/>
</dbReference>
<dbReference type="GO" id="GO:0005576">
    <property type="term" value="C:extracellular region"/>
    <property type="evidence" value="ECO:0007669"/>
    <property type="project" value="UniProtKB-SubCell"/>
</dbReference>
<dbReference type="GO" id="GO:0009274">
    <property type="term" value="C:peptidoglycan-based cell wall"/>
    <property type="evidence" value="ECO:0007005"/>
    <property type="project" value="MTBBASE"/>
</dbReference>
<dbReference type="GO" id="GO:0005886">
    <property type="term" value="C:plasma membrane"/>
    <property type="evidence" value="ECO:0007005"/>
    <property type="project" value="MTBBASE"/>
</dbReference>
<dbReference type="GO" id="GO:0044315">
    <property type="term" value="P:protein secretion by the type VII secretion system"/>
    <property type="evidence" value="ECO:0000315"/>
    <property type="project" value="MTBBASE"/>
</dbReference>
<reference key="1">
    <citation type="journal article" date="1998" name="Nature">
        <title>Deciphering the biology of Mycobacterium tuberculosis from the complete genome sequence.</title>
        <authorList>
            <person name="Cole S.T."/>
            <person name="Brosch R."/>
            <person name="Parkhill J."/>
            <person name="Garnier T."/>
            <person name="Churcher C.M."/>
            <person name="Harris D.E."/>
            <person name="Gordon S.V."/>
            <person name="Eiglmeier K."/>
            <person name="Gas S."/>
            <person name="Barry C.E. III"/>
            <person name="Tekaia F."/>
            <person name="Badcock K."/>
            <person name="Basham D."/>
            <person name="Brown D."/>
            <person name="Chillingworth T."/>
            <person name="Connor R."/>
            <person name="Davies R.M."/>
            <person name="Devlin K."/>
            <person name="Feltwell T."/>
            <person name="Gentles S."/>
            <person name="Hamlin N."/>
            <person name="Holroyd S."/>
            <person name="Hornsby T."/>
            <person name="Jagels K."/>
            <person name="Krogh A."/>
            <person name="McLean J."/>
            <person name="Moule S."/>
            <person name="Murphy L.D."/>
            <person name="Oliver S."/>
            <person name="Osborne J."/>
            <person name="Quail M.A."/>
            <person name="Rajandream M.A."/>
            <person name="Rogers J."/>
            <person name="Rutter S."/>
            <person name="Seeger K."/>
            <person name="Skelton S."/>
            <person name="Squares S."/>
            <person name="Squares R."/>
            <person name="Sulston J.E."/>
            <person name="Taylor K."/>
            <person name="Whitehead S."/>
            <person name="Barrell B.G."/>
        </authorList>
    </citation>
    <scope>NUCLEOTIDE SEQUENCE [LARGE SCALE GENOMIC DNA]</scope>
    <source>
        <strain>ATCC 25618 / H37Rv</strain>
    </source>
</reference>
<reference key="2">
    <citation type="journal article" date="2005" name="Mol. Microbiol.">
        <title>A non-RD1 gene cluster is required for Snm secretion in Mycobacterium tuberculosis.</title>
        <authorList>
            <person name="MacGurn J.A."/>
            <person name="Raghavan S."/>
            <person name="Stanley S.A."/>
            <person name="Cox J.S."/>
        </authorList>
    </citation>
    <scope>FUNCTION</scope>
    <scope>INTERACTION WITH ECCE1</scope>
    <source>
        <strain>ATCC 35801 / TMC 107 / Erdman</strain>
    </source>
</reference>
<reference key="3">
    <citation type="journal article" date="2006" name="Mol. Microbiol.">
        <title>The Mycobacterium tuberculosis PhoPR two-component system regulates genes essential for virulence and complex lipid biosynthesis.</title>
        <authorList>
            <person name="Walters S.B."/>
            <person name="Dubnau E."/>
            <person name="Kolesnikova I."/>
            <person name="Laval F."/>
            <person name="Daffe M."/>
            <person name="Smith I."/>
        </authorList>
    </citation>
    <scope>REGULATION BY PHOP/PHOR</scope>
    <source>
        <strain>H37Rv</strain>
    </source>
</reference>
<reference key="4">
    <citation type="journal article" date="2008" name="Nature">
        <title>Secreted transcription factor controls Mycobacterium tuberculosis virulence.</title>
        <authorList>
            <person name="Raghavan S."/>
            <person name="Manzanillo P."/>
            <person name="Chan K."/>
            <person name="Dovey C."/>
            <person name="Cox J.S."/>
        </authorList>
    </citation>
    <scope>REGULATION BY ESPR</scope>
</reference>
<reference key="5">
    <citation type="journal article" date="2011" name="Mol. Cell. Proteomics">
        <title>Proteogenomic analysis of Mycobacterium tuberculosis by high resolution mass spectrometry.</title>
        <authorList>
            <person name="Kelkar D.S."/>
            <person name="Kumar D."/>
            <person name="Kumar P."/>
            <person name="Balakrishnan L."/>
            <person name="Muthusamy B."/>
            <person name="Yadav A.K."/>
            <person name="Shrivastava P."/>
            <person name="Marimuthu A."/>
            <person name="Anand S."/>
            <person name="Sundaram H."/>
            <person name="Kingsbury R."/>
            <person name="Harsha H.C."/>
            <person name="Nair B."/>
            <person name="Prasad T.S."/>
            <person name="Chauhan D.S."/>
            <person name="Katoch K."/>
            <person name="Katoch V.M."/>
            <person name="Kumar P."/>
            <person name="Chaerkady R."/>
            <person name="Ramachandran S."/>
            <person name="Dash D."/>
            <person name="Pandey A."/>
        </authorList>
    </citation>
    <scope>IDENTIFICATION BY MASS SPECTROMETRY [LARGE SCALE ANALYSIS]</scope>
    <source>
        <strain>ATCC 25618 / H37Rv</strain>
    </source>
</reference>
<reference key="6">
    <citation type="journal article" date="2012" name="J. Bacteriol.">
        <title>EspD is critical for the virulence-mediating ESX-1 secretion system in Mycobacterium tuberculosis.</title>
        <authorList>
            <person name="Chen J.M."/>
            <person name="Boy-Roettger S."/>
            <person name="Dhar N."/>
            <person name="Sweeney N."/>
            <person name="Buxton R.S."/>
            <person name="Pojer F."/>
            <person name="Rosenkrands I."/>
            <person name="Cole S.T."/>
        </authorList>
    </citation>
    <scope>FUNCTION</scope>
    <scope>SUBCELLULAR LOCATION</scope>
    <scope>DISRUPTION PHENOTYPE</scope>
    <scope>MUTAGENESIS OF TRP-19; TRP-27; PRO-31; ARG-138 AND TRP-150</scope>
    <source>
        <strain>ATCC 35801 / TMC 107 / Erdman</strain>
        <strain>H37Rv</strain>
    </source>
</reference>
<reference key="7">
    <citation type="journal article" date="2012" name="J. Bacteriol.">
        <title>Long-range transcriptional control of an operon necessary for virulence-critical ESX-1 secretion in Mycobacterium tuberculosis.</title>
        <authorList>
            <person name="Hunt D.M."/>
            <person name="Sweeney N.P."/>
            <person name="Mori L."/>
            <person name="Whalan R.H."/>
            <person name="Comas I."/>
            <person name="Norman L."/>
            <person name="Cortes T."/>
            <person name="Arnvig K.B."/>
            <person name="Davis E.O."/>
            <person name="Stapleton M.R."/>
            <person name="Green J."/>
            <person name="Buxton R.S."/>
        </authorList>
    </citation>
    <scope>REGULATION BY ESPR</scope>
    <source>
        <strain>ATCC 25618 / H37Rv</strain>
    </source>
</reference>
<reference key="8">
    <citation type="journal article" date="2013" name="J. Bacteriol.">
        <title>MprAB regulates the espA operon in Mycobacterium tuberculosis and modulates ESX-1 function and host cytokine response.</title>
        <authorList>
            <person name="Pang X."/>
            <person name="Samten B."/>
            <person name="Cao G."/>
            <person name="Wang X."/>
            <person name="Tvinnereim A.R."/>
            <person name="Chen X.L."/>
            <person name="Howard S.T."/>
        </authorList>
    </citation>
    <scope>REGULATION BY MPRA/MPRB</scope>
    <source>
        <strain>H37Rv</strain>
    </source>
</reference>
<reference key="9">
    <citation type="journal article" date="2015" name="Microbiology">
        <title>EspR, a regulator of the ESX-1 secretion system in Mycobacterium tuberculosis, is directly regulated by the two-component systems MprAB and PhoPR.</title>
        <authorList>
            <person name="Cao G."/>
            <person name="Howard S.T."/>
            <person name="Zhang P."/>
            <person name="Wang X."/>
            <person name="Chen X.L."/>
            <person name="Samten B."/>
            <person name="Pang X."/>
        </authorList>
    </citation>
    <scope>TRANSCRIPTIONAL REGULATION</scope>
    <source>
        <strain>ATCC 35801 / TMC 107 / Erdman</strain>
    </source>
</reference>
<evidence type="ECO:0000256" key="1">
    <source>
        <dbReference type="SAM" id="MobiDB-lite"/>
    </source>
</evidence>
<evidence type="ECO:0000269" key="2">
    <source>
    </source>
</evidence>
<evidence type="ECO:0000269" key="3">
    <source>
    </source>
</evidence>
<evidence type="ECO:0000269" key="4">
    <source>
    </source>
</evidence>
<evidence type="ECO:0000269" key="5">
    <source>
    </source>
</evidence>
<evidence type="ECO:0000269" key="6">
    <source>
    </source>
</evidence>
<evidence type="ECO:0000269" key="7">
    <source>
    </source>
</evidence>
<evidence type="ECO:0000269" key="8">
    <source>
    </source>
</evidence>
<evidence type="ECO:0000303" key="9">
    <source>
    </source>
</evidence>
<evidence type="ECO:0000305" key="10"/>
<protein>
    <recommendedName>
        <fullName evidence="10">ESX-1 secretion-associated protein EspD</fullName>
    </recommendedName>
</protein>
<keyword id="KW-1185">Reference proteome</keyword>
<keyword id="KW-0964">Secreted</keyword>
<keyword id="KW-0843">Virulence</keyword>
<proteinExistence type="evidence at protein level"/>
<gene>
    <name type="primary">espD</name>
    <name evidence="9" type="synonym">snm10</name>
    <name type="ordered locus">Rv3614c</name>
</gene>
<feature type="chain" id="PRO_0000393904" description="ESX-1 secretion-associated protein EspD">
    <location>
        <begin position="1"/>
        <end position="184"/>
    </location>
</feature>
<feature type="region of interest" description="Disordered" evidence="1">
    <location>
        <begin position="33"/>
        <end position="56"/>
    </location>
</feature>
<feature type="mutagenesis site" description="Absence of EspD secretion." evidence="5">
    <original>W</original>
    <variation>R</variation>
    <location>
        <position position="19"/>
    </location>
</feature>
<feature type="mutagenesis site" description="Absence of EspD secretion." evidence="5">
    <original>W</original>
    <variation>R</variation>
    <location>
        <position position="27"/>
    </location>
</feature>
<feature type="mutagenesis site" description="Decreased EspD secretion and small reduction in cellular EspA levels." evidence="5">
    <original>P</original>
    <variation>A</variation>
    <location>
        <position position="31"/>
    </location>
</feature>
<feature type="mutagenesis site" description="Absence of EsxA secretion. Decreases EspD stability." evidence="5">
    <original>R</original>
    <variation>A</variation>
    <location>
        <position position="138"/>
    </location>
</feature>
<feature type="mutagenesis site" description="Absence of EspD secretion. Decreases EspA levels." evidence="5">
    <original>W</original>
    <variation>R</variation>
    <location>
        <position position="150"/>
    </location>
</feature>
<accession>P9WJD5</accession>
<accession>L0TEQ0</accession>
<accession>O06269</accession>
<accession>Q7D573</accession>